<comment type="subunit">
    <text evidence="1">Forms oligomers.</text>
</comment>
<comment type="subcellular location">
    <subcellularLocation>
        <location evidence="1">Cytoplasm</location>
        <location evidence="1">Nucleoid</location>
    </subcellularLocation>
</comment>
<comment type="similarity">
    <text evidence="1">Belongs to the MraZ family.</text>
</comment>
<reference key="1">
    <citation type="journal article" date="2003" name="Appl. Microbiol. Biotechnol.">
        <title>The Corynebacterium glutamicum genome: features and impacts on biotechnological processes.</title>
        <authorList>
            <person name="Ikeda M."/>
            <person name="Nakagawa S."/>
        </authorList>
    </citation>
    <scope>NUCLEOTIDE SEQUENCE [LARGE SCALE GENOMIC DNA]</scope>
    <source>
        <strain>ATCC 13032 / DSM 20300 / JCM 1318 / BCRC 11384 / CCUG 27702 / LMG 3730 / NBRC 12168 / NCIMB 10025 / NRRL B-2784 / 534</strain>
    </source>
</reference>
<reference key="2">
    <citation type="journal article" date="2003" name="J. Biotechnol.">
        <title>The complete Corynebacterium glutamicum ATCC 13032 genome sequence and its impact on the production of L-aspartate-derived amino acids and vitamins.</title>
        <authorList>
            <person name="Kalinowski J."/>
            <person name="Bathe B."/>
            <person name="Bartels D."/>
            <person name="Bischoff N."/>
            <person name="Bott M."/>
            <person name="Burkovski A."/>
            <person name="Dusch N."/>
            <person name="Eggeling L."/>
            <person name="Eikmanns B.J."/>
            <person name="Gaigalat L."/>
            <person name="Goesmann A."/>
            <person name="Hartmann M."/>
            <person name="Huthmacher K."/>
            <person name="Kraemer R."/>
            <person name="Linke B."/>
            <person name="McHardy A.C."/>
            <person name="Meyer F."/>
            <person name="Moeckel B."/>
            <person name="Pfefferle W."/>
            <person name="Puehler A."/>
            <person name="Rey D.A."/>
            <person name="Rueckert C."/>
            <person name="Rupp O."/>
            <person name="Sahm H."/>
            <person name="Wendisch V.F."/>
            <person name="Wiegraebe I."/>
            <person name="Tauch A."/>
        </authorList>
    </citation>
    <scope>NUCLEOTIDE SEQUENCE [LARGE SCALE GENOMIC DNA]</scope>
    <source>
        <strain>ATCC 13032 / DSM 20300 / JCM 1318 / BCRC 11384 / CCUG 27702 / LMG 3730 / NBRC 12168 / NCIMB 10025 / NRRL B-2784 / 534</strain>
    </source>
</reference>
<proteinExistence type="inferred from homology"/>
<dbReference type="EMBL" id="BA000036">
    <property type="protein sequence ID" value="BAB99560.1"/>
    <property type="molecule type" value="Genomic_DNA"/>
</dbReference>
<dbReference type="EMBL" id="BX927154">
    <property type="protein sequence ID" value="CAF20507.1"/>
    <property type="molecule type" value="Genomic_DNA"/>
</dbReference>
<dbReference type="RefSeq" id="NP_601369.1">
    <property type="nucleotide sequence ID" value="NC_003450.3"/>
</dbReference>
<dbReference type="RefSeq" id="WP_003856549.1">
    <property type="nucleotide sequence ID" value="NC_006958.1"/>
</dbReference>
<dbReference type="SMR" id="Q8NNM6"/>
<dbReference type="STRING" id="196627.cg2378"/>
<dbReference type="GeneID" id="1020119"/>
<dbReference type="KEGG" id="cgb:cg2378"/>
<dbReference type="KEGG" id="cgl:Cgl2167"/>
<dbReference type="PATRIC" id="fig|196627.13.peg.2105"/>
<dbReference type="eggNOG" id="COG2001">
    <property type="taxonomic scope" value="Bacteria"/>
</dbReference>
<dbReference type="HOGENOM" id="CLU_107907_0_5_11"/>
<dbReference type="OrthoDB" id="9807753at2"/>
<dbReference type="BioCyc" id="CORYNE:G18NG-11759-MONOMER"/>
<dbReference type="Proteomes" id="UP000000582">
    <property type="component" value="Chromosome"/>
</dbReference>
<dbReference type="Proteomes" id="UP000001009">
    <property type="component" value="Chromosome"/>
</dbReference>
<dbReference type="GO" id="GO:0005737">
    <property type="term" value="C:cytoplasm"/>
    <property type="evidence" value="ECO:0007669"/>
    <property type="project" value="UniProtKB-UniRule"/>
</dbReference>
<dbReference type="GO" id="GO:0009295">
    <property type="term" value="C:nucleoid"/>
    <property type="evidence" value="ECO:0007669"/>
    <property type="project" value="UniProtKB-SubCell"/>
</dbReference>
<dbReference type="GO" id="GO:0003700">
    <property type="term" value="F:DNA-binding transcription factor activity"/>
    <property type="evidence" value="ECO:0007669"/>
    <property type="project" value="UniProtKB-UniRule"/>
</dbReference>
<dbReference type="GO" id="GO:0000976">
    <property type="term" value="F:transcription cis-regulatory region binding"/>
    <property type="evidence" value="ECO:0007669"/>
    <property type="project" value="TreeGrafter"/>
</dbReference>
<dbReference type="GO" id="GO:2000143">
    <property type="term" value="P:negative regulation of DNA-templated transcription initiation"/>
    <property type="evidence" value="ECO:0007669"/>
    <property type="project" value="TreeGrafter"/>
</dbReference>
<dbReference type="CDD" id="cd16321">
    <property type="entry name" value="MraZ_C"/>
    <property type="match status" value="1"/>
</dbReference>
<dbReference type="CDD" id="cd16320">
    <property type="entry name" value="MraZ_N"/>
    <property type="match status" value="1"/>
</dbReference>
<dbReference type="Gene3D" id="3.40.1550.20">
    <property type="entry name" value="Transcriptional regulator MraZ domain"/>
    <property type="match status" value="1"/>
</dbReference>
<dbReference type="HAMAP" id="MF_01008">
    <property type="entry name" value="MraZ"/>
    <property type="match status" value="1"/>
</dbReference>
<dbReference type="InterPro" id="IPR003444">
    <property type="entry name" value="MraZ"/>
</dbReference>
<dbReference type="InterPro" id="IPR035644">
    <property type="entry name" value="MraZ_C"/>
</dbReference>
<dbReference type="InterPro" id="IPR020603">
    <property type="entry name" value="MraZ_dom"/>
</dbReference>
<dbReference type="InterPro" id="IPR035642">
    <property type="entry name" value="MraZ_N"/>
</dbReference>
<dbReference type="InterPro" id="IPR038619">
    <property type="entry name" value="MraZ_sf"/>
</dbReference>
<dbReference type="InterPro" id="IPR007159">
    <property type="entry name" value="SpoVT-AbrB_dom"/>
</dbReference>
<dbReference type="InterPro" id="IPR037914">
    <property type="entry name" value="SpoVT-AbrB_sf"/>
</dbReference>
<dbReference type="NCBIfam" id="TIGR00242">
    <property type="entry name" value="division/cell wall cluster transcriptional repressor MraZ"/>
    <property type="match status" value="1"/>
</dbReference>
<dbReference type="PANTHER" id="PTHR34701">
    <property type="entry name" value="TRANSCRIPTIONAL REGULATOR MRAZ"/>
    <property type="match status" value="1"/>
</dbReference>
<dbReference type="PANTHER" id="PTHR34701:SF1">
    <property type="entry name" value="TRANSCRIPTIONAL REGULATOR MRAZ"/>
    <property type="match status" value="1"/>
</dbReference>
<dbReference type="Pfam" id="PF02381">
    <property type="entry name" value="MraZ"/>
    <property type="match status" value="2"/>
</dbReference>
<dbReference type="SUPFAM" id="SSF89447">
    <property type="entry name" value="AbrB/MazE/MraZ-like"/>
    <property type="match status" value="1"/>
</dbReference>
<dbReference type="PROSITE" id="PS51740">
    <property type="entry name" value="SPOVT_ABRB"/>
    <property type="match status" value="2"/>
</dbReference>
<gene>
    <name evidence="1" type="primary">mraZ</name>
    <name type="ordered locus">Cgl2167</name>
    <name type="ordered locus">cg2378</name>
</gene>
<feature type="chain" id="PRO_0000108474" description="Transcriptional regulator MraZ">
    <location>
        <begin position="1"/>
        <end position="143"/>
    </location>
</feature>
<feature type="domain" description="SpoVT-AbrB 1" evidence="2">
    <location>
        <begin position="5"/>
        <end position="47"/>
    </location>
</feature>
<feature type="domain" description="SpoVT-AbrB 2" evidence="2">
    <location>
        <begin position="76"/>
        <end position="119"/>
    </location>
</feature>
<name>MRAZ_CORGL</name>
<accession>Q8NNM6</accession>
<sequence>MFLGTYTPKLDDKGRLTLPAKFREDLAGGLMVTKGQDHSLAVYPKEEFAARARKAAAVSRTNPEARAFIRNLAASADEQRPDGQGRITLSAAHRTYAGLTKECVVIGSVDFLEIWDAQAWAAYQEETEAAFSAAEDDVLGGLL</sequence>
<organism>
    <name type="scientific">Corynebacterium glutamicum (strain ATCC 13032 / DSM 20300 / JCM 1318 / BCRC 11384 / CCUG 27702 / LMG 3730 / NBRC 12168 / NCIMB 10025 / NRRL B-2784 / 534)</name>
    <dbReference type="NCBI Taxonomy" id="196627"/>
    <lineage>
        <taxon>Bacteria</taxon>
        <taxon>Bacillati</taxon>
        <taxon>Actinomycetota</taxon>
        <taxon>Actinomycetes</taxon>
        <taxon>Mycobacteriales</taxon>
        <taxon>Corynebacteriaceae</taxon>
        <taxon>Corynebacterium</taxon>
    </lineage>
</organism>
<evidence type="ECO:0000255" key="1">
    <source>
        <dbReference type="HAMAP-Rule" id="MF_01008"/>
    </source>
</evidence>
<evidence type="ECO:0000255" key="2">
    <source>
        <dbReference type="PROSITE-ProRule" id="PRU01076"/>
    </source>
</evidence>
<protein>
    <recommendedName>
        <fullName>Transcriptional regulator MraZ</fullName>
    </recommendedName>
</protein>
<keyword id="KW-0963">Cytoplasm</keyword>
<keyword id="KW-0238">DNA-binding</keyword>
<keyword id="KW-1185">Reference proteome</keyword>
<keyword id="KW-0677">Repeat</keyword>
<keyword id="KW-0804">Transcription</keyword>
<keyword id="KW-0805">Transcription regulation</keyword>